<organism>
    <name type="scientific">Rattus norvegicus</name>
    <name type="common">Rat</name>
    <dbReference type="NCBI Taxonomy" id="10116"/>
    <lineage>
        <taxon>Eukaryota</taxon>
        <taxon>Metazoa</taxon>
        <taxon>Chordata</taxon>
        <taxon>Craniata</taxon>
        <taxon>Vertebrata</taxon>
        <taxon>Euteleostomi</taxon>
        <taxon>Mammalia</taxon>
        <taxon>Eutheria</taxon>
        <taxon>Euarchontoglires</taxon>
        <taxon>Glires</taxon>
        <taxon>Rodentia</taxon>
        <taxon>Myomorpha</taxon>
        <taxon>Muroidea</taxon>
        <taxon>Muridae</taxon>
        <taxon>Murinae</taxon>
        <taxon>Rattus</taxon>
    </lineage>
</organism>
<accession>Q6UE39</accession>
<sequence>MRRLVYCKVVLATSLMWVLVDVFLLLYFSECNKCDDKKERSLLPALRAVISRNQEGPGEMGKAVLIPKDDQEKMKELFKINQFNLMASDLIALNRSLPDVRLEGCKTKVYPDELPNTSVVIVFHNEAWSTLLRTVYSVINRSPHYLLSEVILVDDASERDFLKLTLENYVKTLEVPVKIIRMEERSGLIRARLRGAAASKGQVITFLDAHCECTLGWLEPLLARIKEDRKTVVCPIIDVISDDTFEYMAGSDMTYGGFNWKLNFRWYPVPQREMDRRKGDRTLPVRTPTMAGGLFSIDRNYFEEIGTYDAGMDIWGGENLEMSFRIWQCGGSLEIVTCSHVGHVFRKATPYTFPGGTGHVINKNNRRLAEVWMDEFKDFFYIISPGVVKVDYGDVSVRKTLRENLKCKPFSWYLENIYPDSQIPRRYYSLGEIRNVETNQCLDNMGRKENEKVGIFNCHGMGGNQVFSYTADKEIRTDDLCLDVSRLSGPVIMLKCHHMRGNQLWEYDAERLTLRHANSNQCLDEPSEEDKMVPTMQDCSGSRSQQWLLRNMTLGT</sequence>
<protein>
    <recommendedName>
        <fullName>Polypeptide N-acetylgalactosaminyltransferase 13</fullName>
        <ecNumber evidence="4">2.4.1.41</ecNumber>
    </recommendedName>
    <alternativeName>
        <fullName>Polypeptide GalNAc transferase 13</fullName>
        <shortName>GalNAc-T13</shortName>
        <shortName>pp-GaNTase 13</shortName>
    </alternativeName>
    <alternativeName>
        <fullName>Protein-UDP acetylgalactosaminyltransferase 13</fullName>
    </alternativeName>
    <alternativeName>
        <fullName>UDP-GalNAc:polypeptide N-acetylgalactosaminyltransferase 13</fullName>
    </alternativeName>
</protein>
<reference key="1">
    <citation type="submission" date="2003-08" db="EMBL/GenBank/DDBJ databases">
        <authorList>
            <person name="Huang C.Q."/>
            <person name="Wu S.L."/>
            <person name="Liu S."/>
        </authorList>
    </citation>
    <scope>NUCLEOTIDE SEQUENCE [MRNA]</scope>
</reference>
<feature type="chain" id="PRO_0000059132" description="Polypeptide N-acetylgalactosaminyltransferase 13">
    <location>
        <begin position="1"/>
        <end position="556"/>
    </location>
</feature>
<feature type="topological domain" description="Cytoplasmic" evidence="5">
    <location>
        <begin position="1"/>
        <end position="4"/>
    </location>
</feature>
<feature type="transmembrane region" description="Helical; Signal-anchor for type II membrane protein" evidence="5">
    <location>
        <begin position="5"/>
        <end position="27"/>
    </location>
</feature>
<feature type="topological domain" description="Lumenal" evidence="5">
    <location>
        <begin position="28"/>
        <end position="556"/>
    </location>
</feature>
<feature type="domain" description="Ricin B-type lectin" evidence="6">
    <location>
        <begin position="428"/>
        <end position="550"/>
    </location>
</feature>
<feature type="region of interest" description="Catalytic subdomain A">
    <location>
        <begin position="114"/>
        <end position="224"/>
    </location>
</feature>
<feature type="region of interest" description="Catalytic subdomain B">
    <location>
        <begin position="284"/>
        <end position="346"/>
    </location>
</feature>
<feature type="binding site" evidence="2">
    <location>
        <position position="155"/>
    </location>
    <ligand>
        <name>substrate</name>
    </ligand>
</feature>
<feature type="binding site" evidence="2">
    <location>
        <position position="185"/>
    </location>
    <ligand>
        <name>substrate</name>
    </ligand>
</feature>
<feature type="binding site" evidence="2">
    <location>
        <position position="208"/>
    </location>
    <ligand>
        <name>Mn(2+)</name>
        <dbReference type="ChEBI" id="CHEBI:29035"/>
    </ligand>
</feature>
<feature type="binding site" evidence="2">
    <location>
        <position position="210"/>
    </location>
    <ligand>
        <name>Mn(2+)</name>
        <dbReference type="ChEBI" id="CHEBI:29035"/>
    </ligand>
</feature>
<feature type="binding site" evidence="2">
    <location>
        <position position="315"/>
    </location>
    <ligand>
        <name>substrate</name>
    </ligand>
</feature>
<feature type="binding site" evidence="2">
    <location>
        <position position="343"/>
    </location>
    <ligand>
        <name>Mn(2+)</name>
        <dbReference type="ChEBI" id="CHEBI:29035"/>
    </ligand>
</feature>
<feature type="binding site" evidence="2">
    <location>
        <position position="346"/>
    </location>
    <ligand>
        <name>substrate</name>
    </ligand>
</feature>
<feature type="binding site" evidence="2">
    <location>
        <position position="351"/>
    </location>
    <ligand>
        <name>substrate</name>
    </ligand>
</feature>
<feature type="glycosylation site" description="N-linked (GlcNAc...) asparagine" evidence="5">
    <location>
        <position position="94"/>
    </location>
</feature>
<feature type="glycosylation site" description="N-linked (GlcNAc...) asparagine" evidence="5">
    <location>
        <position position="116"/>
    </location>
</feature>
<feature type="glycosylation site" description="N-linked (GlcNAc...) asparagine" evidence="5">
    <location>
        <position position="551"/>
    </location>
</feature>
<feature type="disulfide bond" evidence="6">
    <location>
        <begin position="105"/>
        <end position="338"/>
    </location>
</feature>
<feature type="disulfide bond" evidence="6">
    <location>
        <begin position="329"/>
        <end position="407"/>
    </location>
</feature>
<feature type="disulfide bond" evidence="6">
    <location>
        <begin position="441"/>
        <end position="458"/>
    </location>
</feature>
<feature type="disulfide bond" evidence="6">
    <location>
        <begin position="481"/>
        <end position="496"/>
    </location>
</feature>
<feature type="disulfide bond" evidence="6">
    <location>
        <begin position="522"/>
        <end position="539"/>
    </location>
</feature>
<evidence type="ECO:0000250" key="1"/>
<evidence type="ECO:0000250" key="2">
    <source>
        <dbReference type="UniProtKB" id="Q10471"/>
    </source>
</evidence>
<evidence type="ECO:0000250" key="3">
    <source>
        <dbReference type="UniProtKB" id="Q8CF93"/>
    </source>
</evidence>
<evidence type="ECO:0000250" key="4">
    <source>
        <dbReference type="UniProtKB" id="Q8IUC8"/>
    </source>
</evidence>
<evidence type="ECO:0000255" key="5"/>
<evidence type="ECO:0000255" key="6">
    <source>
        <dbReference type="PROSITE-ProRule" id="PRU00174"/>
    </source>
</evidence>
<evidence type="ECO:0000305" key="7"/>
<gene>
    <name type="primary">Galnt13</name>
</gene>
<comment type="function">
    <text evidence="3 4">Catalyzes the initial reaction in O-linked oligosaccharide biosynthesis, the transfer of an N-acetyl-D-galactosamine (GalNAc) residue from UDP-GalNAc to a serine or threonine residue on the protein receptor (By similarity). Generates GalNAc-O-Ser/Thr structure also known as Tn antigen, which itself is immunogenic but also serves as a precursor for the synthesis of different mucin-type O-glycan core structures (By similarity). Contributes to the synthesis of O-linked glycans on mucins and proteoglycans of the central nervous system (By similarity). Can glycosylate both unmodified peptides and glycopeptides that already contain an O-linked GalNAc sugar. Transfers GalNAc to Thr-/Ser-rich tandem repeats GTTPSPVPTTSTTSAP of MUC5AC. Transfers GalNAc to three consecutive serine/threonine residues on SDC3 forming a triplet-Tn epitope expressed in Purkinje cells of the developing brain (By similarity). May promote neurogenesis through glycosylation and stabilization of PDPN (By similarity).</text>
</comment>
<comment type="catalytic activity">
    <reaction evidence="4">
        <text>L-seryl-[protein] + UDP-N-acetyl-alpha-D-galactosamine = a 3-O-[N-acetyl-alpha-D-galactosaminyl]-L-seryl-[protein] + UDP + H(+)</text>
        <dbReference type="Rhea" id="RHEA:23956"/>
        <dbReference type="Rhea" id="RHEA-COMP:9863"/>
        <dbReference type="Rhea" id="RHEA-COMP:12788"/>
        <dbReference type="ChEBI" id="CHEBI:15378"/>
        <dbReference type="ChEBI" id="CHEBI:29999"/>
        <dbReference type="ChEBI" id="CHEBI:53604"/>
        <dbReference type="ChEBI" id="CHEBI:58223"/>
        <dbReference type="ChEBI" id="CHEBI:67138"/>
        <dbReference type="EC" id="2.4.1.41"/>
    </reaction>
    <physiologicalReaction direction="left-to-right" evidence="4">
        <dbReference type="Rhea" id="RHEA:23957"/>
    </physiologicalReaction>
</comment>
<comment type="catalytic activity">
    <reaction evidence="4">
        <text>L-threonyl-[protein] + UDP-N-acetyl-alpha-D-galactosamine = a 3-O-[N-acetyl-alpha-D-galactosaminyl]-L-threonyl-[protein] + UDP + H(+)</text>
        <dbReference type="Rhea" id="RHEA:52424"/>
        <dbReference type="Rhea" id="RHEA-COMP:11060"/>
        <dbReference type="Rhea" id="RHEA-COMP:11689"/>
        <dbReference type="ChEBI" id="CHEBI:15378"/>
        <dbReference type="ChEBI" id="CHEBI:30013"/>
        <dbReference type="ChEBI" id="CHEBI:58223"/>
        <dbReference type="ChEBI" id="CHEBI:67138"/>
        <dbReference type="ChEBI" id="CHEBI:87075"/>
        <dbReference type="EC" id="2.4.1.41"/>
    </reaction>
    <physiologicalReaction direction="left-to-right" evidence="4">
        <dbReference type="Rhea" id="RHEA:52425"/>
    </physiologicalReaction>
</comment>
<comment type="cofactor">
    <cofactor evidence="1">
        <name>Mn(2+)</name>
        <dbReference type="ChEBI" id="CHEBI:29035"/>
    </cofactor>
</comment>
<comment type="pathway">
    <text evidence="4">Protein modification; protein glycosylation.</text>
</comment>
<comment type="subcellular location">
    <subcellularLocation>
        <location evidence="1">Golgi apparatus membrane</location>
        <topology evidence="1">Single-pass type II membrane protein</topology>
    </subcellularLocation>
</comment>
<comment type="domain">
    <text evidence="1">There are two conserved domains in the glycosyltransferase region: the N-terminal domain (domain A, also called GT1 motif), which is probably involved in manganese coordination and substrate binding and the C-terminal domain (domain B, also called Gal/GalNAc-T motif), which is probably involved in catalytic reaction and UDP-Gal binding.</text>
</comment>
<comment type="domain">
    <text evidence="1">The ricin B-type lectin domain binds to GalNAc and contributes to the glycopeptide specificity.</text>
</comment>
<comment type="similarity">
    <text evidence="7">Belongs to the glycosyltransferase 2 family. GalNAc-T subfamily.</text>
</comment>
<keyword id="KW-1015">Disulfide bond</keyword>
<keyword id="KW-0325">Glycoprotein</keyword>
<keyword id="KW-0328">Glycosyltransferase</keyword>
<keyword id="KW-0333">Golgi apparatus</keyword>
<keyword id="KW-0430">Lectin</keyword>
<keyword id="KW-0464">Manganese</keyword>
<keyword id="KW-0472">Membrane</keyword>
<keyword id="KW-0479">Metal-binding</keyword>
<keyword id="KW-1185">Reference proteome</keyword>
<keyword id="KW-0735">Signal-anchor</keyword>
<keyword id="KW-0808">Transferase</keyword>
<keyword id="KW-0812">Transmembrane</keyword>
<keyword id="KW-1133">Transmembrane helix</keyword>
<dbReference type="EC" id="2.4.1.41" evidence="4"/>
<dbReference type="EMBL" id="AY371923">
    <property type="protein sequence ID" value="AAQ75749.1"/>
    <property type="molecule type" value="mRNA"/>
</dbReference>
<dbReference type="RefSeq" id="NP_001418503.1">
    <property type="nucleotide sequence ID" value="NM_001431574.1"/>
</dbReference>
<dbReference type="RefSeq" id="NP_954537.1">
    <property type="nucleotide sequence ID" value="NM_199106.3"/>
</dbReference>
<dbReference type="RefSeq" id="XP_017447165.1">
    <property type="nucleotide sequence ID" value="XM_017591676.1"/>
</dbReference>
<dbReference type="SMR" id="Q6UE39"/>
<dbReference type="FunCoup" id="Q6UE39">
    <property type="interactions" value="1847"/>
</dbReference>
<dbReference type="STRING" id="10116.ENSRNOP00000042772"/>
<dbReference type="CAZy" id="CBM13">
    <property type="family name" value="Carbohydrate-Binding Module Family 13"/>
</dbReference>
<dbReference type="CAZy" id="GT27">
    <property type="family name" value="Glycosyltransferase Family 27"/>
</dbReference>
<dbReference type="GlyCosmos" id="Q6UE39">
    <property type="glycosylation" value="3 sites, No reported glycans"/>
</dbReference>
<dbReference type="GlyGen" id="Q6UE39">
    <property type="glycosylation" value="3 sites"/>
</dbReference>
<dbReference type="PhosphoSitePlus" id="Q6UE39"/>
<dbReference type="PaxDb" id="10116-ENSRNOP00000042772"/>
<dbReference type="GeneID" id="311039"/>
<dbReference type="KEGG" id="rno:311039"/>
<dbReference type="UCSC" id="RGD:735044">
    <property type="organism name" value="rat"/>
</dbReference>
<dbReference type="AGR" id="RGD:735044"/>
<dbReference type="CTD" id="114805"/>
<dbReference type="RGD" id="735044">
    <property type="gene designation" value="Galnt13"/>
</dbReference>
<dbReference type="VEuPathDB" id="HostDB:ENSRNOG00000005335"/>
<dbReference type="eggNOG" id="KOG3736">
    <property type="taxonomic scope" value="Eukaryota"/>
</dbReference>
<dbReference type="HOGENOM" id="CLU_013477_0_1_1"/>
<dbReference type="InParanoid" id="Q6UE39"/>
<dbReference type="OrthoDB" id="330637at2759"/>
<dbReference type="PhylomeDB" id="Q6UE39"/>
<dbReference type="Reactome" id="R-RNO-913709">
    <property type="pathway name" value="O-linked glycosylation of mucins"/>
</dbReference>
<dbReference type="UniPathway" id="UPA00378"/>
<dbReference type="PRO" id="PR:Q6UE39"/>
<dbReference type="Proteomes" id="UP000002494">
    <property type="component" value="Chromosome 3"/>
</dbReference>
<dbReference type="Bgee" id="ENSRNOG00000005335">
    <property type="expression patterns" value="Expressed in cerebellum and 4 other cell types or tissues"/>
</dbReference>
<dbReference type="GO" id="GO:0005794">
    <property type="term" value="C:Golgi apparatus"/>
    <property type="evidence" value="ECO:0000318"/>
    <property type="project" value="GO_Central"/>
</dbReference>
<dbReference type="GO" id="GO:0000139">
    <property type="term" value="C:Golgi membrane"/>
    <property type="evidence" value="ECO:0007669"/>
    <property type="project" value="UniProtKB-SubCell"/>
</dbReference>
<dbReference type="GO" id="GO:0030246">
    <property type="term" value="F:carbohydrate binding"/>
    <property type="evidence" value="ECO:0007669"/>
    <property type="project" value="UniProtKB-KW"/>
</dbReference>
<dbReference type="GO" id="GO:0046872">
    <property type="term" value="F:metal ion binding"/>
    <property type="evidence" value="ECO:0007669"/>
    <property type="project" value="UniProtKB-KW"/>
</dbReference>
<dbReference type="GO" id="GO:0004653">
    <property type="term" value="F:polypeptide N-acetylgalactosaminyltransferase activity"/>
    <property type="evidence" value="ECO:0000266"/>
    <property type="project" value="RGD"/>
</dbReference>
<dbReference type="GO" id="GO:0006493">
    <property type="term" value="P:protein O-linked glycosylation"/>
    <property type="evidence" value="ECO:0000266"/>
    <property type="project" value="RGD"/>
</dbReference>
<dbReference type="GO" id="GO:0018242">
    <property type="term" value="P:protein O-linked glycosylation via serine"/>
    <property type="evidence" value="ECO:0000266"/>
    <property type="project" value="RGD"/>
</dbReference>
<dbReference type="GO" id="GO:0018243">
    <property type="term" value="P:protein O-linked glycosylation via threonine"/>
    <property type="evidence" value="ECO:0000266"/>
    <property type="project" value="RGD"/>
</dbReference>
<dbReference type="CDD" id="cd23467">
    <property type="entry name" value="beta-trefoil_Ricin_GALNT13"/>
    <property type="match status" value="1"/>
</dbReference>
<dbReference type="CDD" id="cd02510">
    <property type="entry name" value="pp-GalNAc-T"/>
    <property type="match status" value="1"/>
</dbReference>
<dbReference type="FunFam" id="2.80.10.50:FF:000014">
    <property type="entry name" value="Polypeptide N-acetylgalactosaminyltransferase"/>
    <property type="match status" value="1"/>
</dbReference>
<dbReference type="FunFam" id="3.90.550.10:FF:000005">
    <property type="entry name" value="Polypeptide N-acetylgalactosaminyltransferase"/>
    <property type="match status" value="1"/>
</dbReference>
<dbReference type="Gene3D" id="2.80.10.50">
    <property type="match status" value="1"/>
</dbReference>
<dbReference type="Gene3D" id="3.90.550.10">
    <property type="entry name" value="Spore Coat Polysaccharide Biosynthesis Protein SpsA, Chain A"/>
    <property type="match status" value="1"/>
</dbReference>
<dbReference type="InterPro" id="IPR045885">
    <property type="entry name" value="GalNAc-T"/>
</dbReference>
<dbReference type="InterPro" id="IPR001173">
    <property type="entry name" value="Glyco_trans_2-like"/>
</dbReference>
<dbReference type="InterPro" id="IPR029044">
    <property type="entry name" value="Nucleotide-diphossugar_trans"/>
</dbReference>
<dbReference type="InterPro" id="IPR035992">
    <property type="entry name" value="Ricin_B-like_lectins"/>
</dbReference>
<dbReference type="InterPro" id="IPR000772">
    <property type="entry name" value="Ricin_B_lectin"/>
</dbReference>
<dbReference type="PANTHER" id="PTHR11675">
    <property type="entry name" value="N-ACETYLGALACTOSAMINYLTRANSFERASE"/>
    <property type="match status" value="1"/>
</dbReference>
<dbReference type="PANTHER" id="PTHR11675:SF47">
    <property type="entry name" value="POLYPEPTIDE N-ACETYLGALACTOSAMINYLTRANSFERASE 13"/>
    <property type="match status" value="1"/>
</dbReference>
<dbReference type="Pfam" id="PF00535">
    <property type="entry name" value="Glycos_transf_2"/>
    <property type="match status" value="1"/>
</dbReference>
<dbReference type="Pfam" id="PF00652">
    <property type="entry name" value="Ricin_B_lectin"/>
    <property type="match status" value="1"/>
</dbReference>
<dbReference type="SMART" id="SM00458">
    <property type="entry name" value="RICIN"/>
    <property type="match status" value="1"/>
</dbReference>
<dbReference type="SUPFAM" id="SSF53448">
    <property type="entry name" value="Nucleotide-diphospho-sugar transferases"/>
    <property type="match status" value="1"/>
</dbReference>
<dbReference type="SUPFAM" id="SSF50370">
    <property type="entry name" value="Ricin B-like lectins"/>
    <property type="match status" value="1"/>
</dbReference>
<dbReference type="PROSITE" id="PS50231">
    <property type="entry name" value="RICIN_B_LECTIN"/>
    <property type="match status" value="1"/>
</dbReference>
<proteinExistence type="evidence at transcript level"/>
<name>GLT13_RAT</name>